<evidence type="ECO:0000255" key="1">
    <source>
        <dbReference type="HAMAP-Rule" id="MF_00168"/>
    </source>
</evidence>
<evidence type="ECO:0000305" key="2"/>
<protein>
    <recommendedName>
        <fullName evidence="1">Queuine tRNA-ribosyltransferase</fullName>
        <ecNumber evidence="1">2.4.2.29</ecNumber>
    </recommendedName>
    <alternativeName>
        <fullName evidence="1">Guanine insertion enzyme</fullName>
    </alternativeName>
    <alternativeName>
        <fullName evidence="1">tRNA-guanine transglycosylase</fullName>
    </alternativeName>
</protein>
<comment type="function">
    <text evidence="1">Catalyzes the base-exchange of a guanine (G) residue with the queuine precursor 7-aminomethyl-7-deazaguanine (PreQ1) at position 34 (anticodon wobble position) in tRNAs with GU(N) anticodons (tRNA-Asp, -Asn, -His and -Tyr). Catalysis occurs through a double-displacement mechanism. The nucleophile active site attacks the C1' of nucleotide 34 to detach the guanine base from the RNA, forming a covalent enzyme-RNA intermediate. The proton acceptor active site deprotonates the incoming PreQ1, allowing a nucleophilic attack on the C1' of the ribose to form the product. After dissociation, two additional enzymatic reactions on the tRNA convert PreQ1 to queuine (Q), resulting in the hypermodified nucleoside queuosine (7-(((4,5-cis-dihydroxy-2-cyclopenten-1-yl)amino)methyl)-7-deazaguanosine).</text>
</comment>
<comment type="catalytic activity">
    <reaction evidence="1">
        <text>7-aminomethyl-7-carbaguanine + guanosine(34) in tRNA = 7-aminomethyl-7-carbaguanosine(34) in tRNA + guanine</text>
        <dbReference type="Rhea" id="RHEA:24104"/>
        <dbReference type="Rhea" id="RHEA-COMP:10341"/>
        <dbReference type="Rhea" id="RHEA-COMP:10342"/>
        <dbReference type="ChEBI" id="CHEBI:16235"/>
        <dbReference type="ChEBI" id="CHEBI:58703"/>
        <dbReference type="ChEBI" id="CHEBI:74269"/>
        <dbReference type="ChEBI" id="CHEBI:82833"/>
        <dbReference type="EC" id="2.4.2.29"/>
    </reaction>
</comment>
<comment type="cofactor">
    <cofactor evidence="1">
        <name>Zn(2+)</name>
        <dbReference type="ChEBI" id="CHEBI:29105"/>
    </cofactor>
    <text evidence="1">Binds 1 zinc ion per subunit.</text>
</comment>
<comment type="pathway">
    <text evidence="1">tRNA modification; tRNA-queuosine biosynthesis.</text>
</comment>
<comment type="subunit">
    <text evidence="1">Homodimer. Within each dimer, one monomer is responsible for RNA recognition and catalysis, while the other monomer binds to the replacement base PreQ1.</text>
</comment>
<comment type="similarity">
    <text evidence="1">Belongs to the queuine tRNA-ribosyltransferase family.</text>
</comment>
<comment type="sequence caution" evidence="2">
    <conflict type="erroneous initiation">
        <sequence resource="EMBL-CDS" id="ABB39639"/>
    </conflict>
    <text>Extended N-terminus.</text>
</comment>
<proteinExistence type="inferred from homology"/>
<name>TGT_OLEA2</name>
<dbReference type="EC" id="2.4.2.29" evidence="1"/>
<dbReference type="EMBL" id="CP000112">
    <property type="protein sequence ID" value="ABB39639.2"/>
    <property type="status" value="ALT_INIT"/>
    <property type="molecule type" value="Genomic_DNA"/>
</dbReference>
<dbReference type="RefSeq" id="WP_027182460.1">
    <property type="nucleotide sequence ID" value="NC_007519.1"/>
</dbReference>
<dbReference type="SMR" id="Q30XF7"/>
<dbReference type="STRING" id="207559.Dde_2844"/>
<dbReference type="KEGG" id="dde:Dde_2844"/>
<dbReference type="eggNOG" id="COG0343">
    <property type="taxonomic scope" value="Bacteria"/>
</dbReference>
<dbReference type="HOGENOM" id="CLU_022060_0_1_7"/>
<dbReference type="UniPathway" id="UPA00392"/>
<dbReference type="Proteomes" id="UP000002710">
    <property type="component" value="Chromosome"/>
</dbReference>
<dbReference type="GO" id="GO:0005829">
    <property type="term" value="C:cytosol"/>
    <property type="evidence" value="ECO:0007669"/>
    <property type="project" value="TreeGrafter"/>
</dbReference>
<dbReference type="GO" id="GO:0046872">
    <property type="term" value="F:metal ion binding"/>
    <property type="evidence" value="ECO:0007669"/>
    <property type="project" value="UniProtKB-KW"/>
</dbReference>
<dbReference type="GO" id="GO:0008479">
    <property type="term" value="F:tRNA-guanosine(34) queuine transglycosylase activity"/>
    <property type="evidence" value="ECO:0007669"/>
    <property type="project" value="UniProtKB-UniRule"/>
</dbReference>
<dbReference type="GO" id="GO:0008616">
    <property type="term" value="P:queuosine biosynthetic process"/>
    <property type="evidence" value="ECO:0007669"/>
    <property type="project" value="UniProtKB-UniRule"/>
</dbReference>
<dbReference type="GO" id="GO:0002099">
    <property type="term" value="P:tRNA wobble guanine modification"/>
    <property type="evidence" value="ECO:0007669"/>
    <property type="project" value="TreeGrafter"/>
</dbReference>
<dbReference type="GO" id="GO:0101030">
    <property type="term" value="P:tRNA-guanine transglycosylation"/>
    <property type="evidence" value="ECO:0007669"/>
    <property type="project" value="InterPro"/>
</dbReference>
<dbReference type="FunFam" id="3.20.20.105:FF:000001">
    <property type="entry name" value="Queuine tRNA-ribosyltransferase"/>
    <property type="match status" value="1"/>
</dbReference>
<dbReference type="Gene3D" id="3.20.20.105">
    <property type="entry name" value="Queuine tRNA-ribosyltransferase-like"/>
    <property type="match status" value="1"/>
</dbReference>
<dbReference type="HAMAP" id="MF_00168">
    <property type="entry name" value="Q_tRNA_Tgt"/>
    <property type="match status" value="1"/>
</dbReference>
<dbReference type="InterPro" id="IPR050076">
    <property type="entry name" value="ArchSynthase1/Queuine_TRR"/>
</dbReference>
<dbReference type="InterPro" id="IPR004803">
    <property type="entry name" value="TGT"/>
</dbReference>
<dbReference type="InterPro" id="IPR036511">
    <property type="entry name" value="TGT-like_sf"/>
</dbReference>
<dbReference type="InterPro" id="IPR002616">
    <property type="entry name" value="tRNA_ribo_trans-like"/>
</dbReference>
<dbReference type="NCBIfam" id="TIGR00430">
    <property type="entry name" value="Q_tRNA_tgt"/>
    <property type="match status" value="1"/>
</dbReference>
<dbReference type="NCBIfam" id="TIGR00449">
    <property type="entry name" value="tgt_general"/>
    <property type="match status" value="1"/>
</dbReference>
<dbReference type="PANTHER" id="PTHR46499">
    <property type="entry name" value="QUEUINE TRNA-RIBOSYLTRANSFERASE"/>
    <property type="match status" value="1"/>
</dbReference>
<dbReference type="PANTHER" id="PTHR46499:SF1">
    <property type="entry name" value="QUEUINE TRNA-RIBOSYLTRANSFERASE"/>
    <property type="match status" value="1"/>
</dbReference>
<dbReference type="Pfam" id="PF01702">
    <property type="entry name" value="TGT"/>
    <property type="match status" value="1"/>
</dbReference>
<dbReference type="SUPFAM" id="SSF51713">
    <property type="entry name" value="tRNA-guanine transglycosylase"/>
    <property type="match status" value="1"/>
</dbReference>
<keyword id="KW-0328">Glycosyltransferase</keyword>
<keyword id="KW-0479">Metal-binding</keyword>
<keyword id="KW-0671">Queuosine biosynthesis</keyword>
<keyword id="KW-1185">Reference proteome</keyword>
<keyword id="KW-0808">Transferase</keyword>
<keyword id="KW-0819">tRNA processing</keyword>
<keyword id="KW-0862">Zinc</keyword>
<accession>Q30XF7</accession>
<organism>
    <name type="scientific">Oleidesulfovibrio alaskensis (strain ATCC BAA-1058 / DSM 17464 / G20)</name>
    <name type="common">Desulfovibrio alaskensis</name>
    <dbReference type="NCBI Taxonomy" id="207559"/>
    <lineage>
        <taxon>Bacteria</taxon>
        <taxon>Pseudomonadati</taxon>
        <taxon>Thermodesulfobacteriota</taxon>
        <taxon>Desulfovibrionia</taxon>
        <taxon>Desulfovibrionales</taxon>
        <taxon>Desulfovibrionaceae</taxon>
        <taxon>Oleidesulfovibrio</taxon>
    </lineage>
</organism>
<sequence>MATIGEFTLHATDGKARTGVLQTAHGPVRTPIFMPVGTVGSVKGVAPDDLDAIGAEIILGNTYHLYLRPGDELVARRGGLHEFNAWRKPILTDSGGFQVFSLSGLRRISEEGVEFRSHLDGSKHLFTPEKVVSIQRNLNSDIMMVLDECVPYGADKDYTARSLKMTTRWAQRCRDAYPAGSGGNLMFGITQGGFFKDLREESIGELTRIDFDGFALGGLSVGESKTEMMDILYHTAPMLPAHKPRYLMGVGTPLDIINGINAGIDMFDCVLPTRNARNGTLYTSAGKINIKRREFAEDDGPLDPNCSCYTCRTFSRAYLRHLFHAQEILSYRLNSIHNLTYFLDLVRGAREAIAQGTFAEYKSRYDAIYPQEAALCP</sequence>
<feature type="chain" id="PRO_1000077004" description="Queuine tRNA-ribosyltransferase">
    <location>
        <begin position="1"/>
        <end position="377"/>
    </location>
</feature>
<feature type="region of interest" description="RNA binding" evidence="1">
    <location>
        <begin position="249"/>
        <end position="255"/>
    </location>
</feature>
<feature type="region of interest" description="RNA binding; important for wobble base 34 recognition" evidence="1">
    <location>
        <begin position="273"/>
        <end position="277"/>
    </location>
</feature>
<feature type="active site" description="Proton acceptor" evidence="1">
    <location>
        <position position="93"/>
    </location>
</feature>
<feature type="active site" description="Nucleophile" evidence="1">
    <location>
        <position position="268"/>
    </location>
</feature>
<feature type="binding site" evidence="1">
    <location>
        <begin position="93"/>
        <end position="97"/>
    </location>
    <ligand>
        <name>substrate</name>
    </ligand>
</feature>
<feature type="binding site" evidence="1">
    <location>
        <position position="147"/>
    </location>
    <ligand>
        <name>substrate</name>
    </ligand>
</feature>
<feature type="binding site" evidence="1">
    <location>
        <position position="191"/>
    </location>
    <ligand>
        <name>substrate</name>
    </ligand>
</feature>
<feature type="binding site" evidence="1">
    <location>
        <position position="218"/>
    </location>
    <ligand>
        <name>substrate</name>
    </ligand>
</feature>
<feature type="binding site" evidence="1">
    <location>
        <position position="306"/>
    </location>
    <ligand>
        <name>Zn(2+)</name>
        <dbReference type="ChEBI" id="CHEBI:29105"/>
    </ligand>
</feature>
<feature type="binding site" evidence="1">
    <location>
        <position position="308"/>
    </location>
    <ligand>
        <name>Zn(2+)</name>
        <dbReference type="ChEBI" id="CHEBI:29105"/>
    </ligand>
</feature>
<feature type="binding site" evidence="1">
    <location>
        <position position="311"/>
    </location>
    <ligand>
        <name>Zn(2+)</name>
        <dbReference type="ChEBI" id="CHEBI:29105"/>
    </ligand>
</feature>
<feature type="binding site" evidence="1">
    <location>
        <position position="337"/>
    </location>
    <ligand>
        <name>Zn(2+)</name>
        <dbReference type="ChEBI" id="CHEBI:29105"/>
    </ligand>
</feature>
<reference key="1">
    <citation type="journal article" date="2011" name="J. Bacteriol.">
        <title>Complete genome sequence and updated annotation of Desulfovibrio alaskensis G20.</title>
        <authorList>
            <person name="Hauser L.J."/>
            <person name="Land M.L."/>
            <person name="Brown S.D."/>
            <person name="Larimer F."/>
            <person name="Keller K.L."/>
            <person name="Rapp-Giles B.J."/>
            <person name="Price M.N."/>
            <person name="Lin M."/>
            <person name="Bruce D.C."/>
            <person name="Detter J.C."/>
            <person name="Tapia R."/>
            <person name="Han C.S."/>
            <person name="Goodwin L.A."/>
            <person name="Cheng J.F."/>
            <person name="Pitluck S."/>
            <person name="Copeland A."/>
            <person name="Lucas S."/>
            <person name="Nolan M."/>
            <person name="Lapidus A.L."/>
            <person name="Palumbo A.V."/>
            <person name="Wall J.D."/>
        </authorList>
    </citation>
    <scope>NUCLEOTIDE SEQUENCE [LARGE SCALE GENOMIC DNA]</scope>
    <source>
        <strain>ATCC BAA-1058 / DSM 17464 / G20</strain>
    </source>
</reference>
<gene>
    <name evidence="1" type="primary">tgt</name>
    <name type="ordered locus">Dde_2844</name>
</gene>